<dbReference type="EMBL" id="BC078514">
    <property type="protein sequence ID" value="AAH78514.1"/>
    <property type="molecule type" value="mRNA"/>
</dbReference>
<dbReference type="RefSeq" id="NP_001087288.1">
    <property type="nucleotide sequence ID" value="NM_001093819.2"/>
</dbReference>
<dbReference type="SMR" id="Q66KY5"/>
<dbReference type="GlyCosmos" id="Q66KY5">
    <property type="glycosylation" value="1 site, No reported glycans"/>
</dbReference>
<dbReference type="DNASU" id="447110"/>
<dbReference type="GeneID" id="447110"/>
<dbReference type="KEGG" id="xla:447110"/>
<dbReference type="AGR" id="Xenbase:XB-GENE-17336351"/>
<dbReference type="CTD" id="447110"/>
<dbReference type="Xenbase" id="XB-GENE-17336351">
    <property type="gene designation" value="nkain1.L"/>
</dbReference>
<dbReference type="OMA" id="DSHMAPD"/>
<dbReference type="OrthoDB" id="10050321at2759"/>
<dbReference type="Proteomes" id="UP000186698">
    <property type="component" value="Chromosome 2L"/>
</dbReference>
<dbReference type="Bgee" id="447110">
    <property type="expression patterns" value="Expressed in neurula embryo and 7 other cell types or tissues"/>
</dbReference>
<dbReference type="GO" id="GO:0005886">
    <property type="term" value="C:plasma membrane"/>
    <property type="evidence" value="ECO:0007669"/>
    <property type="project" value="UniProtKB-SubCell"/>
</dbReference>
<dbReference type="GO" id="GO:0002028">
    <property type="term" value="P:regulation of sodium ion transport"/>
    <property type="evidence" value="ECO:0000318"/>
    <property type="project" value="GO_Central"/>
</dbReference>
<dbReference type="InterPro" id="IPR008516">
    <property type="entry name" value="Na/K-Atpase_Interacting"/>
</dbReference>
<dbReference type="PANTHER" id="PTHR13084:SF4">
    <property type="entry name" value="SODIUM_POTASSIUM-TRANSPORTING ATPASE SUBUNIT BETA-1-INTERACTING PROTEIN 1"/>
    <property type="match status" value="1"/>
</dbReference>
<dbReference type="PANTHER" id="PTHR13084">
    <property type="entry name" value="T-CELL LYMPHOMA BREAKPOINT-ASSOCIATED TARGET 1-RELATED"/>
    <property type="match status" value="1"/>
</dbReference>
<dbReference type="Pfam" id="PF05640">
    <property type="entry name" value="NKAIN"/>
    <property type="match status" value="1"/>
</dbReference>
<organism>
    <name type="scientific">Xenopus laevis</name>
    <name type="common">African clawed frog</name>
    <dbReference type="NCBI Taxonomy" id="8355"/>
    <lineage>
        <taxon>Eukaryota</taxon>
        <taxon>Metazoa</taxon>
        <taxon>Chordata</taxon>
        <taxon>Craniata</taxon>
        <taxon>Vertebrata</taxon>
        <taxon>Euteleostomi</taxon>
        <taxon>Amphibia</taxon>
        <taxon>Batrachia</taxon>
        <taxon>Anura</taxon>
        <taxon>Pipoidea</taxon>
        <taxon>Pipidae</taxon>
        <taxon>Xenopodinae</taxon>
        <taxon>Xenopus</taxon>
        <taxon>Xenopus</taxon>
    </lineage>
</organism>
<keyword id="KW-1003">Cell membrane</keyword>
<keyword id="KW-0325">Glycoprotein</keyword>
<keyword id="KW-0472">Membrane</keyword>
<keyword id="KW-1185">Reference proteome</keyword>
<keyword id="KW-0812">Transmembrane</keyword>
<keyword id="KW-1133">Transmembrane helix</keyword>
<reference key="1">
    <citation type="submission" date="2004-07" db="EMBL/GenBank/DDBJ databases">
        <authorList>
            <consortium name="NIH - Xenopus Gene Collection (XGC) project"/>
        </authorList>
    </citation>
    <scope>NUCLEOTIDE SEQUENCE [LARGE SCALE MRNA]</scope>
</reference>
<feature type="chain" id="PRO_0000263645" description="Sodium/potassium-transporting ATPase subunit beta-1-interacting protein 1">
    <location>
        <begin position="1"/>
        <end position="207"/>
    </location>
</feature>
<feature type="transmembrane region" description="Helical" evidence="2">
    <location>
        <begin position="2"/>
        <end position="22"/>
    </location>
</feature>
<feature type="transmembrane region" description="Helical" evidence="2">
    <location>
        <begin position="35"/>
        <end position="55"/>
    </location>
</feature>
<feature type="transmembrane region" description="Helical" evidence="2">
    <location>
        <begin position="62"/>
        <end position="82"/>
    </location>
</feature>
<feature type="transmembrane region" description="Helical" evidence="2">
    <location>
        <begin position="147"/>
        <end position="167"/>
    </location>
</feature>
<feature type="glycosylation site" description="N-linked (GlcNAc...) asparagine" evidence="2">
    <location>
        <position position="100"/>
    </location>
</feature>
<evidence type="ECO:0000250" key="1"/>
<evidence type="ECO:0000255" key="2"/>
<evidence type="ECO:0000305" key="3"/>
<protein>
    <recommendedName>
        <fullName>Sodium/potassium-transporting ATPase subunit beta-1-interacting protein 1</fullName>
        <shortName>Na(+)/K(+)-transporting ATPase subunit beta-1-interacting protein 1</shortName>
    </recommendedName>
    <alternativeName>
        <fullName>Protein FAM77C</fullName>
    </alternativeName>
</protein>
<comment type="subunit">
    <text evidence="1">Interacts with atp1b1 C-terminus.</text>
</comment>
<comment type="subcellular location">
    <subcellularLocation>
        <location evidence="3">Cell membrane</location>
        <topology evidence="3">Multi-pass membrane protein</topology>
    </subcellularLocation>
</comment>
<comment type="similarity">
    <text evidence="3">Belongs to the NKAIN family.</text>
</comment>
<accession>Q66KY5</accession>
<gene>
    <name type="primary">nkain1</name>
    <name type="synonym">fam77c</name>
</gene>
<proteinExistence type="evidence at transcript level"/>
<sequence length="207" mass="23660">MGRCSGRCTLVGICCLQLAAALQRQIFDFLGYQWAPILANFLHIMVVILGILGTLHYRSRYLILYSIWLALWVAWNAFIICFYLEVGHFSQHRDLIMNFNTSMHRSWWMENGPGCLVTPVRGPPLSLADHHMVTVTGCLLDYPYIEALSSALQIFLALFGFVYACYVSKVFMDEEDSFDFIGSYDSYGYQAPMKTSHLQLQPLYKPG</sequence>
<name>NKAI1_XENLA</name>